<name>CHED2_SHEON</name>
<organism>
    <name type="scientific">Shewanella oneidensis (strain ATCC 700550 / JCM 31522 / CIP 106686 / LMG 19005 / NCIMB 14063 / MR-1)</name>
    <dbReference type="NCBI Taxonomy" id="211586"/>
    <lineage>
        <taxon>Bacteria</taxon>
        <taxon>Pseudomonadati</taxon>
        <taxon>Pseudomonadota</taxon>
        <taxon>Gammaproteobacteria</taxon>
        <taxon>Alteromonadales</taxon>
        <taxon>Shewanellaceae</taxon>
        <taxon>Shewanella</taxon>
    </lineage>
</organism>
<reference key="1">
    <citation type="journal article" date="2002" name="Nat. Biotechnol.">
        <title>Genome sequence of the dissimilatory metal ion-reducing bacterium Shewanella oneidensis.</title>
        <authorList>
            <person name="Heidelberg J.F."/>
            <person name="Paulsen I.T."/>
            <person name="Nelson K.E."/>
            <person name="Gaidos E.J."/>
            <person name="Nelson W.C."/>
            <person name="Read T.D."/>
            <person name="Eisen J.A."/>
            <person name="Seshadri R."/>
            <person name="Ward N.L."/>
            <person name="Methe B.A."/>
            <person name="Clayton R.A."/>
            <person name="Meyer T."/>
            <person name="Tsapin A."/>
            <person name="Scott J."/>
            <person name="Beanan M.J."/>
            <person name="Brinkac L.M."/>
            <person name="Daugherty S.C."/>
            <person name="DeBoy R.T."/>
            <person name="Dodson R.J."/>
            <person name="Durkin A.S."/>
            <person name="Haft D.H."/>
            <person name="Kolonay J.F."/>
            <person name="Madupu R."/>
            <person name="Peterson J.D."/>
            <person name="Umayam L.A."/>
            <person name="White O."/>
            <person name="Wolf A.M."/>
            <person name="Vamathevan J.J."/>
            <person name="Weidman J.F."/>
            <person name="Impraim M."/>
            <person name="Lee K."/>
            <person name="Berry K.J."/>
            <person name="Lee C."/>
            <person name="Mueller J."/>
            <person name="Khouri H.M."/>
            <person name="Gill J."/>
            <person name="Utterback T.R."/>
            <person name="McDonald L.A."/>
            <person name="Feldblyum T.V."/>
            <person name="Smith H.O."/>
            <person name="Venter J.C."/>
            <person name="Nealson K.H."/>
            <person name="Fraser C.M."/>
        </authorList>
    </citation>
    <scope>NUCLEOTIDE SEQUENCE [LARGE SCALE GENOMIC DNA]</scope>
    <source>
        <strain>ATCC 700550 / JCM 31522 / CIP 106686 / LMG 19005 / NCIMB 14063 / MR-1</strain>
    </source>
</reference>
<accession>Q8EEQ1</accession>
<protein>
    <recommendedName>
        <fullName evidence="1">Probable chemoreceptor glutamine deamidase CheD 2</fullName>
        <ecNumber evidence="1">3.5.1.44</ecNumber>
    </recommendedName>
</protein>
<comment type="function">
    <text evidence="1">Probably deamidates glutamine residues to glutamate on methyl-accepting chemotaxis receptors (MCPs), playing an important role in chemotaxis.</text>
</comment>
<comment type="catalytic activity">
    <reaction evidence="1">
        <text>L-glutaminyl-[protein] + H2O = L-glutamyl-[protein] + NH4(+)</text>
        <dbReference type="Rhea" id="RHEA:16441"/>
        <dbReference type="Rhea" id="RHEA-COMP:10207"/>
        <dbReference type="Rhea" id="RHEA-COMP:10208"/>
        <dbReference type="ChEBI" id="CHEBI:15377"/>
        <dbReference type="ChEBI" id="CHEBI:28938"/>
        <dbReference type="ChEBI" id="CHEBI:29973"/>
        <dbReference type="ChEBI" id="CHEBI:30011"/>
        <dbReference type="EC" id="3.5.1.44"/>
    </reaction>
</comment>
<comment type="similarity">
    <text evidence="1">Belongs to the CheD family.</text>
</comment>
<proteinExistence type="inferred from homology"/>
<gene>
    <name evidence="1" type="primary">cheD2</name>
    <name type="synonym">cheD-2</name>
    <name type="ordered locus">SO_2326</name>
</gene>
<sequence length="202" mass="23028">MENMAFNQRTVVMIGPGEHYVTAKNEVIKTLLGSCVAVCLYDPKAQVIGMNHFLLAADRRKFTHFLDSRAGYYGVHAMEILINAMLKRGAQRKYLQSKIFGGANVLSLCADNILNHYDIGGMNIDFVRHFLQRERIPIISEDIGGHCGRVIYFDPTDYSVYRSLIEHKYEEIASLQDEEYRYFNQASEDIHSSGVPVVIWSD</sequence>
<feature type="chain" id="PRO_0000251065" description="Probable chemoreceptor glutamine deamidase CheD 2">
    <location>
        <begin position="1"/>
        <end position="202"/>
    </location>
</feature>
<keyword id="KW-0145">Chemotaxis</keyword>
<keyword id="KW-0378">Hydrolase</keyword>
<keyword id="KW-1185">Reference proteome</keyword>
<dbReference type="EC" id="3.5.1.44" evidence="1"/>
<dbReference type="EMBL" id="AE014299">
    <property type="protein sequence ID" value="AAN55360.2"/>
    <property type="molecule type" value="Genomic_DNA"/>
</dbReference>
<dbReference type="RefSeq" id="NP_717916.2">
    <property type="nucleotide sequence ID" value="NC_004347.2"/>
</dbReference>
<dbReference type="SMR" id="Q8EEQ1"/>
<dbReference type="STRING" id="211586.SO_2326"/>
<dbReference type="PaxDb" id="211586-SO_2326"/>
<dbReference type="DNASU" id="1170050"/>
<dbReference type="KEGG" id="son:SO_2326"/>
<dbReference type="PATRIC" id="fig|211586.12.peg.2241"/>
<dbReference type="eggNOG" id="COG1871">
    <property type="taxonomic scope" value="Bacteria"/>
</dbReference>
<dbReference type="HOGENOM" id="CLU_087854_0_0_6"/>
<dbReference type="OrthoDB" id="9807202at2"/>
<dbReference type="PhylomeDB" id="Q8EEQ1"/>
<dbReference type="BioCyc" id="SONE211586:G1GMP-2125-MONOMER"/>
<dbReference type="Proteomes" id="UP000008186">
    <property type="component" value="Chromosome"/>
</dbReference>
<dbReference type="GO" id="GO:0050568">
    <property type="term" value="F:protein-glutamine glutaminase activity"/>
    <property type="evidence" value="ECO:0007669"/>
    <property type="project" value="UniProtKB-UniRule"/>
</dbReference>
<dbReference type="GO" id="GO:0006935">
    <property type="term" value="P:chemotaxis"/>
    <property type="evidence" value="ECO:0007669"/>
    <property type="project" value="UniProtKB-UniRule"/>
</dbReference>
<dbReference type="CDD" id="cd16352">
    <property type="entry name" value="CheD"/>
    <property type="match status" value="1"/>
</dbReference>
<dbReference type="Gene3D" id="3.30.1330.200">
    <property type="match status" value="1"/>
</dbReference>
<dbReference type="HAMAP" id="MF_01440">
    <property type="entry name" value="CheD"/>
    <property type="match status" value="1"/>
</dbReference>
<dbReference type="InterPro" id="IPR038592">
    <property type="entry name" value="CheD-like_sf"/>
</dbReference>
<dbReference type="InterPro" id="IPR005659">
    <property type="entry name" value="Chemorcpt_Glu_NH3ase_CheD"/>
</dbReference>
<dbReference type="InterPro" id="IPR011324">
    <property type="entry name" value="Cytotoxic_necrot_fac-like_cat"/>
</dbReference>
<dbReference type="PANTHER" id="PTHR35147:SF3">
    <property type="entry name" value="CHEMORECEPTOR GLUTAMINE DEAMIDASE CHED 1-RELATED"/>
    <property type="match status" value="1"/>
</dbReference>
<dbReference type="PANTHER" id="PTHR35147">
    <property type="entry name" value="CHEMORECEPTOR GLUTAMINE DEAMIDASE CHED-RELATED"/>
    <property type="match status" value="1"/>
</dbReference>
<dbReference type="Pfam" id="PF03975">
    <property type="entry name" value="CheD"/>
    <property type="match status" value="1"/>
</dbReference>
<dbReference type="SUPFAM" id="SSF64438">
    <property type="entry name" value="CNF1/YfiH-like putative cysteine hydrolases"/>
    <property type="match status" value="1"/>
</dbReference>
<evidence type="ECO:0000255" key="1">
    <source>
        <dbReference type="HAMAP-Rule" id="MF_01440"/>
    </source>
</evidence>